<evidence type="ECO:0000255" key="1">
    <source>
        <dbReference type="HAMAP-Rule" id="MF_00392"/>
    </source>
</evidence>
<dbReference type="EC" id="2.4.1.182" evidence="1"/>
<dbReference type="EMBL" id="CP000447">
    <property type="protein sequence ID" value="ABI71136.1"/>
    <property type="molecule type" value="Genomic_DNA"/>
</dbReference>
<dbReference type="RefSeq" id="WP_011636757.1">
    <property type="nucleotide sequence ID" value="NC_008345.1"/>
</dbReference>
<dbReference type="SMR" id="Q085C9"/>
<dbReference type="STRING" id="318167.Sfri_1283"/>
<dbReference type="CAZy" id="GT19">
    <property type="family name" value="Glycosyltransferase Family 19"/>
</dbReference>
<dbReference type="KEGG" id="sfr:Sfri_1283"/>
<dbReference type="eggNOG" id="COG0763">
    <property type="taxonomic scope" value="Bacteria"/>
</dbReference>
<dbReference type="HOGENOM" id="CLU_036577_3_0_6"/>
<dbReference type="OrthoDB" id="9801642at2"/>
<dbReference type="UniPathway" id="UPA00973"/>
<dbReference type="Proteomes" id="UP000000684">
    <property type="component" value="Chromosome"/>
</dbReference>
<dbReference type="GO" id="GO:0016020">
    <property type="term" value="C:membrane"/>
    <property type="evidence" value="ECO:0007669"/>
    <property type="project" value="GOC"/>
</dbReference>
<dbReference type="GO" id="GO:0008915">
    <property type="term" value="F:lipid-A-disaccharide synthase activity"/>
    <property type="evidence" value="ECO:0007669"/>
    <property type="project" value="UniProtKB-UniRule"/>
</dbReference>
<dbReference type="GO" id="GO:0005543">
    <property type="term" value="F:phospholipid binding"/>
    <property type="evidence" value="ECO:0007669"/>
    <property type="project" value="TreeGrafter"/>
</dbReference>
<dbReference type="GO" id="GO:0009245">
    <property type="term" value="P:lipid A biosynthetic process"/>
    <property type="evidence" value="ECO:0007669"/>
    <property type="project" value="UniProtKB-UniRule"/>
</dbReference>
<dbReference type="CDD" id="cd01635">
    <property type="entry name" value="Glycosyltransferase_GTB-type"/>
    <property type="match status" value="1"/>
</dbReference>
<dbReference type="HAMAP" id="MF_00392">
    <property type="entry name" value="LpxB"/>
    <property type="match status" value="1"/>
</dbReference>
<dbReference type="InterPro" id="IPR003835">
    <property type="entry name" value="Glyco_trans_19"/>
</dbReference>
<dbReference type="NCBIfam" id="TIGR00215">
    <property type="entry name" value="lpxB"/>
    <property type="match status" value="1"/>
</dbReference>
<dbReference type="PANTHER" id="PTHR30372">
    <property type="entry name" value="LIPID-A-DISACCHARIDE SYNTHASE"/>
    <property type="match status" value="1"/>
</dbReference>
<dbReference type="PANTHER" id="PTHR30372:SF4">
    <property type="entry name" value="LIPID-A-DISACCHARIDE SYNTHASE, MITOCHONDRIAL-RELATED"/>
    <property type="match status" value="1"/>
</dbReference>
<dbReference type="Pfam" id="PF02684">
    <property type="entry name" value="LpxB"/>
    <property type="match status" value="1"/>
</dbReference>
<dbReference type="SUPFAM" id="SSF53756">
    <property type="entry name" value="UDP-Glycosyltransferase/glycogen phosphorylase"/>
    <property type="match status" value="1"/>
</dbReference>
<keyword id="KW-0328">Glycosyltransferase</keyword>
<keyword id="KW-0441">Lipid A biosynthesis</keyword>
<keyword id="KW-0444">Lipid biosynthesis</keyword>
<keyword id="KW-0443">Lipid metabolism</keyword>
<keyword id="KW-1185">Reference proteome</keyword>
<keyword id="KW-0808">Transferase</keyword>
<accession>Q085C9</accession>
<sequence>MTNSPSKVFAIVAGEISGDILGAGLVNSLKKRYPDARFIGIGGPRMQALGFESLFPMEELSIMGLVEVLSHLPRLLHIRSSLVKQITELAPDCFIGIDAPDFNIGVELKLKAKGIKTVHYVSPSVWAWRPKRIFKIAKATNMVLSLLPFEKAFYDQHQVPCTFVGHTLADDIPMHSDKLAARQLLGLDPNAEYLAVLPGSRGGELKQLAEPFVKAAQLVKQTFPDIKFVTPVVNDARRQQFLAALEEFAPDLEVTIVEGQSREVMAAADCILLASGTATLEAMLVKRPMVVSYRVSPITYAIAIKMMKIKNYSLPNLLANDTIVPELMQANCQPQLIADAIIKQLNQDFAPLNTRFEELHQLLKCNASERAADAVVALLQTP</sequence>
<comment type="function">
    <text evidence="1">Condensation of UDP-2,3-diacylglucosamine and 2,3-diacylglucosamine-1-phosphate to form lipid A disaccharide, a precursor of lipid A, a phosphorylated glycolipid that anchors the lipopolysaccharide to the outer membrane of the cell.</text>
</comment>
<comment type="catalytic activity">
    <reaction evidence="1">
        <text>a lipid X + a UDP-2-N,3-O-bis[(3R)-3-hydroxyacyl]-alpha-D-glucosamine = a lipid A disaccharide + UDP + H(+)</text>
        <dbReference type="Rhea" id="RHEA:67828"/>
        <dbReference type="ChEBI" id="CHEBI:15378"/>
        <dbReference type="ChEBI" id="CHEBI:58223"/>
        <dbReference type="ChEBI" id="CHEBI:137748"/>
        <dbReference type="ChEBI" id="CHEBI:176338"/>
        <dbReference type="ChEBI" id="CHEBI:176343"/>
        <dbReference type="EC" id="2.4.1.182"/>
    </reaction>
</comment>
<comment type="pathway">
    <text evidence="1">Bacterial outer membrane biogenesis; LPS lipid A biosynthesis.</text>
</comment>
<comment type="similarity">
    <text evidence="1">Belongs to the LpxB family.</text>
</comment>
<organism>
    <name type="scientific">Shewanella frigidimarina (strain NCIMB 400)</name>
    <dbReference type="NCBI Taxonomy" id="318167"/>
    <lineage>
        <taxon>Bacteria</taxon>
        <taxon>Pseudomonadati</taxon>
        <taxon>Pseudomonadota</taxon>
        <taxon>Gammaproteobacteria</taxon>
        <taxon>Alteromonadales</taxon>
        <taxon>Shewanellaceae</taxon>
        <taxon>Shewanella</taxon>
    </lineage>
</organism>
<name>LPXB_SHEFN</name>
<reference key="1">
    <citation type="submission" date="2006-08" db="EMBL/GenBank/DDBJ databases">
        <title>Complete sequence of Shewanella frigidimarina NCIMB 400.</title>
        <authorList>
            <consortium name="US DOE Joint Genome Institute"/>
            <person name="Copeland A."/>
            <person name="Lucas S."/>
            <person name="Lapidus A."/>
            <person name="Barry K."/>
            <person name="Detter J.C."/>
            <person name="Glavina del Rio T."/>
            <person name="Hammon N."/>
            <person name="Israni S."/>
            <person name="Dalin E."/>
            <person name="Tice H."/>
            <person name="Pitluck S."/>
            <person name="Fredrickson J.K."/>
            <person name="Kolker E."/>
            <person name="McCuel L.A."/>
            <person name="DiChristina T."/>
            <person name="Nealson K.H."/>
            <person name="Newman D."/>
            <person name="Tiedje J.M."/>
            <person name="Zhou J."/>
            <person name="Romine M.F."/>
            <person name="Culley D.E."/>
            <person name="Serres M."/>
            <person name="Chertkov O."/>
            <person name="Brettin T."/>
            <person name="Bruce D."/>
            <person name="Han C."/>
            <person name="Tapia R."/>
            <person name="Gilna P."/>
            <person name="Schmutz J."/>
            <person name="Larimer F."/>
            <person name="Land M."/>
            <person name="Hauser L."/>
            <person name="Kyrpides N."/>
            <person name="Mikhailova N."/>
            <person name="Richardson P."/>
        </authorList>
    </citation>
    <scope>NUCLEOTIDE SEQUENCE [LARGE SCALE GENOMIC DNA]</scope>
    <source>
        <strain>NCIMB 400</strain>
    </source>
</reference>
<proteinExistence type="inferred from homology"/>
<feature type="chain" id="PRO_1000049415" description="Lipid-A-disaccharide synthase">
    <location>
        <begin position="1"/>
        <end position="382"/>
    </location>
</feature>
<protein>
    <recommendedName>
        <fullName evidence="1">Lipid-A-disaccharide synthase</fullName>
        <ecNumber evidence="1">2.4.1.182</ecNumber>
    </recommendedName>
</protein>
<gene>
    <name evidence="1" type="primary">lpxB</name>
    <name type="ordered locus">Sfri_1283</name>
</gene>